<keyword id="KW-0028">Amino-acid biosynthesis</keyword>
<keyword id="KW-0067">ATP-binding</keyword>
<keyword id="KW-0963">Cytoplasm</keyword>
<keyword id="KW-0368">Histidine biosynthesis</keyword>
<keyword id="KW-0378">Hydrolase</keyword>
<keyword id="KW-0547">Nucleotide-binding</keyword>
<proteinExistence type="inferred from homology"/>
<reference key="1">
    <citation type="journal article" date="2005" name="BMC Genomics">
        <title>Bacterial genome adaptation to niches: divergence of the potential virulence genes in three Burkholderia species of different survival strategies.</title>
        <authorList>
            <person name="Kim H.S."/>
            <person name="Schell M.A."/>
            <person name="Yu Y."/>
            <person name="Ulrich R.L."/>
            <person name="Sarria S.H."/>
            <person name="Nierman W.C."/>
            <person name="DeShazer D."/>
        </authorList>
    </citation>
    <scope>NUCLEOTIDE SEQUENCE [LARGE SCALE GENOMIC DNA]</scope>
    <source>
        <strain>ATCC 700388 / DSM 13276 / CCUG 48851 / CIP 106301 / E264</strain>
    </source>
</reference>
<protein>
    <recommendedName>
        <fullName evidence="1">Phosphoribosyl-ATP pyrophosphatase</fullName>
        <shortName evidence="1">PRA-PH</shortName>
        <ecNumber evidence="1">3.6.1.31</ecNumber>
    </recommendedName>
</protein>
<feature type="chain" id="PRO_0000319643" description="Phosphoribosyl-ATP pyrophosphatase">
    <location>
        <begin position="1"/>
        <end position="122"/>
    </location>
</feature>
<sequence>MTQPTIEDTLLRLAAVIDSRKGGDPEQSYVSRLFHKGDDAVLKKIGEEATEVVLAAKDVRQGGAPSALVGEVADLWFHCLVALSHFDLSPADVIAELERREGMSGIEEKALRKRREREENGG</sequence>
<gene>
    <name evidence="1" type="primary">hisE</name>
    <name type="ordered locus">BTH_I2985</name>
</gene>
<evidence type="ECO:0000255" key="1">
    <source>
        <dbReference type="HAMAP-Rule" id="MF_01020"/>
    </source>
</evidence>
<evidence type="ECO:0000305" key="2"/>
<accession>Q2SUB0</accession>
<name>HIS2_BURTA</name>
<dbReference type="EC" id="3.6.1.31" evidence="1"/>
<dbReference type="EMBL" id="CP000086">
    <property type="protein sequence ID" value="ABC38054.1"/>
    <property type="status" value="ALT_INIT"/>
    <property type="molecule type" value="Genomic_DNA"/>
</dbReference>
<dbReference type="RefSeq" id="WP_009888539.1">
    <property type="nucleotide sequence ID" value="NZ_CP008786.1"/>
</dbReference>
<dbReference type="SMR" id="Q2SUB0"/>
<dbReference type="GeneID" id="45122673"/>
<dbReference type="KEGG" id="bte:BTH_I2985"/>
<dbReference type="HOGENOM" id="CLU_123337_1_2_4"/>
<dbReference type="UniPathway" id="UPA00031">
    <property type="reaction ID" value="UER00007"/>
</dbReference>
<dbReference type="Proteomes" id="UP000001930">
    <property type="component" value="Chromosome I"/>
</dbReference>
<dbReference type="GO" id="GO:0005737">
    <property type="term" value="C:cytoplasm"/>
    <property type="evidence" value="ECO:0007669"/>
    <property type="project" value="UniProtKB-SubCell"/>
</dbReference>
<dbReference type="GO" id="GO:0005524">
    <property type="term" value="F:ATP binding"/>
    <property type="evidence" value="ECO:0007669"/>
    <property type="project" value="UniProtKB-KW"/>
</dbReference>
<dbReference type="GO" id="GO:0004636">
    <property type="term" value="F:phosphoribosyl-ATP diphosphatase activity"/>
    <property type="evidence" value="ECO:0007669"/>
    <property type="project" value="UniProtKB-UniRule"/>
</dbReference>
<dbReference type="GO" id="GO:0000105">
    <property type="term" value="P:L-histidine biosynthetic process"/>
    <property type="evidence" value="ECO:0007669"/>
    <property type="project" value="UniProtKB-UniRule"/>
</dbReference>
<dbReference type="CDD" id="cd11534">
    <property type="entry name" value="NTP-PPase_HisIE_like"/>
    <property type="match status" value="1"/>
</dbReference>
<dbReference type="Gene3D" id="1.10.287.1080">
    <property type="entry name" value="MazG-like"/>
    <property type="match status" value="1"/>
</dbReference>
<dbReference type="HAMAP" id="MF_01020">
    <property type="entry name" value="HisE"/>
    <property type="match status" value="1"/>
</dbReference>
<dbReference type="InterPro" id="IPR008179">
    <property type="entry name" value="HisE"/>
</dbReference>
<dbReference type="InterPro" id="IPR021130">
    <property type="entry name" value="PRib-ATP_PPHydrolase-like"/>
</dbReference>
<dbReference type="NCBIfam" id="TIGR03188">
    <property type="entry name" value="histidine_hisI"/>
    <property type="match status" value="1"/>
</dbReference>
<dbReference type="NCBIfam" id="NF001611">
    <property type="entry name" value="PRK00400.1-3"/>
    <property type="match status" value="1"/>
</dbReference>
<dbReference type="PANTHER" id="PTHR42945">
    <property type="entry name" value="HISTIDINE BIOSYNTHESIS BIFUNCTIONAL PROTEIN"/>
    <property type="match status" value="1"/>
</dbReference>
<dbReference type="PANTHER" id="PTHR42945:SF9">
    <property type="entry name" value="HISTIDINE BIOSYNTHESIS BIFUNCTIONAL PROTEIN HISIE"/>
    <property type="match status" value="1"/>
</dbReference>
<dbReference type="Pfam" id="PF01503">
    <property type="entry name" value="PRA-PH"/>
    <property type="match status" value="1"/>
</dbReference>
<dbReference type="SUPFAM" id="SSF101386">
    <property type="entry name" value="all-alpha NTP pyrophosphatases"/>
    <property type="match status" value="1"/>
</dbReference>
<comment type="catalytic activity">
    <reaction evidence="1">
        <text>1-(5-phospho-beta-D-ribosyl)-ATP + H2O = 1-(5-phospho-beta-D-ribosyl)-5'-AMP + diphosphate + H(+)</text>
        <dbReference type="Rhea" id="RHEA:22828"/>
        <dbReference type="ChEBI" id="CHEBI:15377"/>
        <dbReference type="ChEBI" id="CHEBI:15378"/>
        <dbReference type="ChEBI" id="CHEBI:33019"/>
        <dbReference type="ChEBI" id="CHEBI:59457"/>
        <dbReference type="ChEBI" id="CHEBI:73183"/>
        <dbReference type="EC" id="3.6.1.31"/>
    </reaction>
</comment>
<comment type="pathway">
    <text evidence="1">Amino-acid biosynthesis; L-histidine biosynthesis; L-histidine from 5-phospho-alpha-D-ribose 1-diphosphate: step 2/9.</text>
</comment>
<comment type="subcellular location">
    <subcellularLocation>
        <location evidence="1">Cytoplasm</location>
    </subcellularLocation>
</comment>
<comment type="similarity">
    <text evidence="1">Belongs to the PRA-PH family.</text>
</comment>
<comment type="sequence caution" evidence="2">
    <conflict type="erroneous initiation">
        <sequence resource="EMBL-CDS" id="ABC38054"/>
    </conflict>
</comment>
<organism>
    <name type="scientific">Burkholderia thailandensis (strain ATCC 700388 / DSM 13276 / CCUG 48851 / CIP 106301 / E264)</name>
    <dbReference type="NCBI Taxonomy" id="271848"/>
    <lineage>
        <taxon>Bacteria</taxon>
        <taxon>Pseudomonadati</taxon>
        <taxon>Pseudomonadota</taxon>
        <taxon>Betaproteobacteria</taxon>
        <taxon>Burkholderiales</taxon>
        <taxon>Burkholderiaceae</taxon>
        <taxon>Burkholderia</taxon>
        <taxon>pseudomallei group</taxon>
    </lineage>
</organism>